<comment type="function">
    <text evidence="1">Methylates ribosomal protein L11.</text>
</comment>
<comment type="catalytic activity">
    <reaction evidence="1">
        <text>L-lysyl-[protein] + 3 S-adenosyl-L-methionine = N(6),N(6),N(6)-trimethyl-L-lysyl-[protein] + 3 S-adenosyl-L-homocysteine + 3 H(+)</text>
        <dbReference type="Rhea" id="RHEA:54192"/>
        <dbReference type="Rhea" id="RHEA-COMP:9752"/>
        <dbReference type="Rhea" id="RHEA-COMP:13826"/>
        <dbReference type="ChEBI" id="CHEBI:15378"/>
        <dbReference type="ChEBI" id="CHEBI:29969"/>
        <dbReference type="ChEBI" id="CHEBI:57856"/>
        <dbReference type="ChEBI" id="CHEBI:59789"/>
        <dbReference type="ChEBI" id="CHEBI:61961"/>
    </reaction>
</comment>
<comment type="subcellular location">
    <subcellularLocation>
        <location evidence="1">Cytoplasm</location>
    </subcellularLocation>
</comment>
<comment type="similarity">
    <text evidence="1">Belongs to the methyltransferase superfamily. PrmA family.</text>
</comment>
<organism>
    <name type="scientific">Salmonella enteritidis PT4 (strain P125109)</name>
    <dbReference type="NCBI Taxonomy" id="550537"/>
    <lineage>
        <taxon>Bacteria</taxon>
        <taxon>Pseudomonadati</taxon>
        <taxon>Pseudomonadota</taxon>
        <taxon>Gammaproteobacteria</taxon>
        <taxon>Enterobacterales</taxon>
        <taxon>Enterobacteriaceae</taxon>
        <taxon>Salmonella</taxon>
    </lineage>
</organism>
<proteinExistence type="inferred from homology"/>
<gene>
    <name evidence="1" type="primary">prmA</name>
    <name type="ordered locus">SEN3217</name>
</gene>
<feature type="chain" id="PRO_1000132820" description="Ribosomal protein L11 methyltransferase">
    <location>
        <begin position="1"/>
        <end position="293"/>
    </location>
</feature>
<feature type="binding site" evidence="1">
    <location>
        <position position="145"/>
    </location>
    <ligand>
        <name>S-adenosyl-L-methionine</name>
        <dbReference type="ChEBI" id="CHEBI:59789"/>
    </ligand>
</feature>
<feature type="binding site" evidence="1">
    <location>
        <position position="166"/>
    </location>
    <ligand>
        <name>S-adenosyl-L-methionine</name>
        <dbReference type="ChEBI" id="CHEBI:59789"/>
    </ligand>
</feature>
<feature type="binding site" evidence="1">
    <location>
        <position position="188"/>
    </location>
    <ligand>
        <name>S-adenosyl-L-methionine</name>
        <dbReference type="ChEBI" id="CHEBI:59789"/>
    </ligand>
</feature>
<feature type="binding site" evidence="1">
    <location>
        <position position="230"/>
    </location>
    <ligand>
        <name>S-adenosyl-L-methionine</name>
        <dbReference type="ChEBI" id="CHEBI:59789"/>
    </ligand>
</feature>
<keyword id="KW-0963">Cytoplasm</keyword>
<keyword id="KW-0489">Methyltransferase</keyword>
<keyword id="KW-0949">S-adenosyl-L-methionine</keyword>
<keyword id="KW-0808">Transferase</keyword>
<evidence type="ECO:0000255" key="1">
    <source>
        <dbReference type="HAMAP-Rule" id="MF_00735"/>
    </source>
</evidence>
<reference key="1">
    <citation type="journal article" date="2008" name="Genome Res.">
        <title>Comparative genome analysis of Salmonella enteritidis PT4 and Salmonella gallinarum 287/91 provides insights into evolutionary and host adaptation pathways.</title>
        <authorList>
            <person name="Thomson N.R."/>
            <person name="Clayton D.J."/>
            <person name="Windhorst D."/>
            <person name="Vernikos G."/>
            <person name="Davidson S."/>
            <person name="Churcher C."/>
            <person name="Quail M.A."/>
            <person name="Stevens M."/>
            <person name="Jones M.A."/>
            <person name="Watson M."/>
            <person name="Barron A."/>
            <person name="Layton A."/>
            <person name="Pickard D."/>
            <person name="Kingsley R.A."/>
            <person name="Bignell A."/>
            <person name="Clark L."/>
            <person name="Harris B."/>
            <person name="Ormond D."/>
            <person name="Abdellah Z."/>
            <person name="Brooks K."/>
            <person name="Cherevach I."/>
            <person name="Chillingworth T."/>
            <person name="Woodward J."/>
            <person name="Norberczak H."/>
            <person name="Lord A."/>
            <person name="Arrowsmith C."/>
            <person name="Jagels K."/>
            <person name="Moule S."/>
            <person name="Mungall K."/>
            <person name="Saunders M."/>
            <person name="Whitehead S."/>
            <person name="Chabalgoity J.A."/>
            <person name="Maskell D."/>
            <person name="Humphreys T."/>
            <person name="Roberts M."/>
            <person name="Barrow P.A."/>
            <person name="Dougan G."/>
            <person name="Parkhill J."/>
        </authorList>
    </citation>
    <scope>NUCLEOTIDE SEQUENCE [LARGE SCALE GENOMIC DNA]</scope>
    <source>
        <strain>P125109</strain>
    </source>
</reference>
<dbReference type="EC" id="2.1.1.-" evidence="1"/>
<dbReference type="EMBL" id="AM933172">
    <property type="protein sequence ID" value="CAR34792.1"/>
    <property type="molecule type" value="Genomic_DNA"/>
</dbReference>
<dbReference type="RefSeq" id="WP_001145849.1">
    <property type="nucleotide sequence ID" value="NC_011294.1"/>
</dbReference>
<dbReference type="SMR" id="B5R1C6"/>
<dbReference type="KEGG" id="set:SEN3217"/>
<dbReference type="HOGENOM" id="CLU_049382_4_1_6"/>
<dbReference type="Proteomes" id="UP000000613">
    <property type="component" value="Chromosome"/>
</dbReference>
<dbReference type="GO" id="GO:0005829">
    <property type="term" value="C:cytosol"/>
    <property type="evidence" value="ECO:0007669"/>
    <property type="project" value="TreeGrafter"/>
</dbReference>
<dbReference type="GO" id="GO:0016279">
    <property type="term" value="F:protein-lysine N-methyltransferase activity"/>
    <property type="evidence" value="ECO:0007669"/>
    <property type="project" value="TreeGrafter"/>
</dbReference>
<dbReference type="GO" id="GO:0032259">
    <property type="term" value="P:methylation"/>
    <property type="evidence" value="ECO:0007669"/>
    <property type="project" value="UniProtKB-KW"/>
</dbReference>
<dbReference type="CDD" id="cd02440">
    <property type="entry name" value="AdoMet_MTases"/>
    <property type="match status" value="1"/>
</dbReference>
<dbReference type="FunFam" id="3.40.50.150:FF:000021">
    <property type="entry name" value="Ribosomal protein L11 methyltransferase"/>
    <property type="match status" value="1"/>
</dbReference>
<dbReference type="Gene3D" id="3.40.50.150">
    <property type="entry name" value="Vaccinia Virus protein VP39"/>
    <property type="match status" value="1"/>
</dbReference>
<dbReference type="HAMAP" id="MF_00735">
    <property type="entry name" value="Methyltr_PrmA"/>
    <property type="match status" value="1"/>
</dbReference>
<dbReference type="InterPro" id="IPR050078">
    <property type="entry name" value="Ribosomal_L11_MeTrfase_PrmA"/>
</dbReference>
<dbReference type="InterPro" id="IPR004498">
    <property type="entry name" value="Ribosomal_PrmA_MeTrfase"/>
</dbReference>
<dbReference type="InterPro" id="IPR029063">
    <property type="entry name" value="SAM-dependent_MTases_sf"/>
</dbReference>
<dbReference type="NCBIfam" id="TIGR00406">
    <property type="entry name" value="prmA"/>
    <property type="match status" value="1"/>
</dbReference>
<dbReference type="PANTHER" id="PTHR43648">
    <property type="entry name" value="ELECTRON TRANSFER FLAVOPROTEIN BETA SUBUNIT LYSINE METHYLTRANSFERASE"/>
    <property type="match status" value="1"/>
</dbReference>
<dbReference type="PANTHER" id="PTHR43648:SF1">
    <property type="entry name" value="ELECTRON TRANSFER FLAVOPROTEIN BETA SUBUNIT LYSINE METHYLTRANSFERASE"/>
    <property type="match status" value="1"/>
</dbReference>
<dbReference type="Pfam" id="PF06325">
    <property type="entry name" value="PrmA"/>
    <property type="match status" value="1"/>
</dbReference>
<dbReference type="PIRSF" id="PIRSF000401">
    <property type="entry name" value="RPL11_MTase"/>
    <property type="match status" value="1"/>
</dbReference>
<dbReference type="SUPFAM" id="SSF53335">
    <property type="entry name" value="S-adenosyl-L-methionine-dependent methyltransferases"/>
    <property type="match status" value="1"/>
</dbReference>
<accession>B5R1C6</accession>
<name>PRMA_SALEP</name>
<protein>
    <recommendedName>
        <fullName evidence="1">Ribosomal protein L11 methyltransferase</fullName>
        <shortName evidence="1">L11 Mtase</shortName>
        <ecNumber evidence="1">2.1.1.-</ecNumber>
    </recommendedName>
</protein>
<sequence>MPWIQLKLNTTGANAEELSDALMEAGAVSITFQDTHDTPVFEPLPGETRLWGDTDVIGLFDAETDMKDVVAILEQHPLLGAGFAHKIEQLEDKDWEREWMDNFHPMRFGERLWICPSWRDIPDENAVNVMLDPGLAFGTGTHPTTSLCLQWLDGLDLNGKTVIDFGCGSGILAIAALKLGAAKAIGIDIDPQAIQASRDNAERNGVSDRLELYLPKDQPEAMKADVVVANILAGPLRELAPLISVLPVEGGLLGLSGILASQAESVCDAYAELFTLDPVVEKEEWCRITGRKK</sequence>